<keyword id="KW-0249">Electron transport</keyword>
<keyword id="KW-0349">Heme</keyword>
<keyword id="KW-0408">Iron</keyword>
<keyword id="KW-0472">Membrane</keyword>
<keyword id="KW-0479">Metal-binding</keyword>
<keyword id="KW-0496">Mitochondrion</keyword>
<keyword id="KW-0999">Mitochondrion inner membrane</keyword>
<keyword id="KW-1185">Reference proteome</keyword>
<keyword id="KW-0679">Respiratory chain</keyword>
<keyword id="KW-1278">Translocase</keyword>
<keyword id="KW-0812">Transmembrane</keyword>
<keyword id="KW-1133">Transmembrane helix</keyword>
<keyword id="KW-0813">Transport</keyword>
<keyword id="KW-0830">Ubiquinone</keyword>
<gene>
    <name type="primary">cob</name>
    <name type="synonym">cytb</name>
    <name type="ORF">NCM030</name>
    <name type="ORF">NCU16013</name>
</gene>
<sequence length="385" mass="43524">MRLLKSHPLLKLVNSYLIDASQPSNISYLWNFGSLLACCLIIQIVTGVTLAMHYSPNVLEAFNSIEHIMRDVNNGWLVRYLHSNTASAFFFLVYLHIGRGMYYGSYRAPRTLVWAIGTVILILMMATAFLGYVLPYGQMSLWGATVITNLISAIPWIGQDIVEFIWGGFSVNNATLNRFFALHFVLPFILAALVLMHLIALHDTAGSSNPLGVSGNYDRITFAPYYLFKDLITIFIFIYVLSSFVFFMPNVLGDSENYIMANPMQTPPAIVPEWYLLPFYAILRSIPNKLLGVIAMFSAILAIMLLPITDLGRSKGLQFRPLSKFAFWAFVVNFLILMKLGACHVESPFIELGQFSTIFYFSYFIFIVPVLSLIENTLVDLNYLK</sequence>
<evidence type="ECO:0000250" key="1"/>
<evidence type="ECO:0000250" key="2">
    <source>
        <dbReference type="UniProtKB" id="P00157"/>
    </source>
</evidence>
<evidence type="ECO:0000250" key="3">
    <source>
        <dbReference type="UniProtKB" id="P00163"/>
    </source>
</evidence>
<evidence type="ECO:0000255" key="4">
    <source>
        <dbReference type="PROSITE-ProRule" id="PRU00967"/>
    </source>
</evidence>
<evidence type="ECO:0000255" key="5">
    <source>
        <dbReference type="PROSITE-ProRule" id="PRU00968"/>
    </source>
</evidence>
<evidence type="ECO:0000269" key="6">
    <source>
    </source>
</evidence>
<evidence type="ECO:0000269" key="7">
    <source>
    </source>
</evidence>
<evidence type="ECO:0000269" key="8">
    <source>
    </source>
</evidence>
<evidence type="ECO:0000269" key="9">
    <source>
    </source>
</evidence>
<evidence type="ECO:0000269" key="10">
    <source>
    </source>
</evidence>
<evidence type="ECO:0000269" key="11">
    <source>
    </source>
</evidence>
<evidence type="ECO:0000269" key="12">
    <source>
    </source>
</evidence>
<evidence type="ECO:0000269" key="13">
    <source>
    </source>
</evidence>
<evidence type="ECO:0000303" key="14">
    <source>
    </source>
</evidence>
<evidence type="ECO:0000305" key="15"/>
<evidence type="ECO:0000305" key="16">
    <source>
    </source>
</evidence>
<evidence type="ECO:0000305" key="17">
    <source>
    </source>
</evidence>
<proteinExistence type="evidence at protein level"/>
<comment type="function">
    <text evidence="3 11 16 17">Component of the ubiquinol-cytochrome c oxidoreductase, a multisubunit transmembrane complex that is part of the mitochondrial electron transport chain which drives oxidative phosphorylation. The respiratory chain contains 3 multisubunit complexes succinate dehydrogenase (complex II, CII), ubiquinol-cytochrome c oxidoreductase (cytochrome b-c1 complex, complex III, CIII) and cytochrome c oxidase (complex IV, CIV), that cooperate to transfer electrons derived from NADH and succinate to molecular oxygen, creating an electrochemical gradient over the inner membrane that drives transmembrane transport and the ATP synthase. The cytochrome b-c1 complex catalyzes electron transfer from ubiquinol to cytochrome c, linking this redox reaction to translocation of protons across the mitochondrial inner membrane, with protons being carried across the membrane as hydrogens on the quinol. In the process called Q cycle, 2 protons are consumed from the matrix, 4 protons are released into the intermembrane space and 2 electrons are passed to cytochrome c (Probable) (PubMed:3015618). Cytochrome b is a catalytic core subunit containing 2 b-type hemes BL and BH topographically segregated in the quinone reduction (Qi) and quinol oxidation (Q0) sites on opposite sides of the membrane (By similarity).</text>
</comment>
<comment type="catalytic activity">
    <reaction evidence="8 11">
        <text>a quinol + 2 Fe(III)-[cytochrome c](out) = a quinone + 2 Fe(II)-[cytochrome c](out) + 2 H(+)(out)</text>
        <dbReference type="Rhea" id="RHEA:11484"/>
        <dbReference type="Rhea" id="RHEA-COMP:10350"/>
        <dbReference type="Rhea" id="RHEA-COMP:14399"/>
        <dbReference type="ChEBI" id="CHEBI:15378"/>
        <dbReference type="ChEBI" id="CHEBI:24646"/>
        <dbReference type="ChEBI" id="CHEBI:29033"/>
        <dbReference type="ChEBI" id="CHEBI:29034"/>
        <dbReference type="ChEBI" id="CHEBI:132124"/>
        <dbReference type="EC" id="7.1.1.8"/>
    </reaction>
</comment>
<comment type="cofactor">
    <cofactor evidence="3">
        <name>heme b</name>
        <dbReference type="ChEBI" id="CHEBI:60344"/>
    </cofactor>
    <text evidence="3">Binds 2 heme b groups non-covalently per subunit.</text>
</comment>
<comment type="subunit">
    <text evidence="6 7 9 10 12 13">Component of the ubiquinol-cytochrome c oxidoreductase (cytochrome b-c1 complex, complex III, CIII), a multisubunit enzyme composed of 10 subunits. The complex is composed of 3 respiratory subunits cytochrome b (cob), cytochrome c1 (cyt-1) and Rieske protein (fes-1), 2 core protein subunits pep and ucr-1, and 5 low-molecular weight protein subunits qcr6, qcr7, qcr8, qcr9 and probably NCU16844/qcr10 (PubMed:18251112, PubMed:226365, PubMed:6273583, PubMed:6302289). The complex exists as an obligatory dimer and forms supercomplexes (SCs) in the inner mitochondrial membrane with NADH-ubiquinone oxidoreductase (complex I, CI) and cytochrome c oxidase (complex IV, CIV), resulting in different assemblies (supercomplexes SCI(1)III(2), SCIII(2)IV(1) and SCIII(2)IV(2) as well as higher order I(x)III(y)IV(z) megacomplexes) (PubMed:17873079, PubMed:19239619).</text>
</comment>
<comment type="subcellular location">
    <subcellularLocation>
        <location evidence="10">Mitochondrion inner membrane</location>
        <topology evidence="3">Multi-pass membrane protein</topology>
    </subcellularLocation>
</comment>
<comment type="miscellaneous">
    <text evidence="1">Heme 1 (or BL or b562) is low-potential and absorbs at about 562 nm, and heme 2 (or BH or b566) is high-potential and absorbs at about 566 nm.</text>
</comment>
<comment type="similarity">
    <text evidence="4 5">Belongs to the cytochrome b family.</text>
</comment>
<organism>
    <name type="scientific">Neurospora crassa (strain ATCC 24698 / 74-OR23-1A / CBS 708.71 / DSM 1257 / FGSC 987)</name>
    <dbReference type="NCBI Taxonomy" id="367110"/>
    <lineage>
        <taxon>Eukaryota</taxon>
        <taxon>Fungi</taxon>
        <taxon>Dikarya</taxon>
        <taxon>Ascomycota</taxon>
        <taxon>Pezizomycotina</taxon>
        <taxon>Sordariomycetes</taxon>
        <taxon>Sordariomycetidae</taxon>
        <taxon>Sordariales</taxon>
        <taxon>Sordariaceae</taxon>
        <taxon>Neurospora</taxon>
    </lineage>
</organism>
<dbReference type="EC" id="7.1.1.8" evidence="8 11"/>
<dbReference type="EMBL" id="M37324">
    <property type="protein sequence ID" value="AAA31961.2"/>
    <property type="molecule type" value="Genomic_DNA"/>
</dbReference>
<dbReference type="EMBL" id="KC683708">
    <property type="protein sequence ID" value="AGG16002.1"/>
    <property type="molecule type" value="Genomic_DNA"/>
</dbReference>
<dbReference type="EMBL" id="X06884">
    <property type="protein sequence ID" value="CAB37296.1"/>
    <property type="molecule type" value="Genomic_DNA"/>
</dbReference>
<dbReference type="EMBL" id="K01181">
    <property type="status" value="NOT_ANNOTATED_CDS"/>
    <property type="molecule type" value="Genomic_DNA"/>
</dbReference>
<dbReference type="PIR" id="A00158">
    <property type="entry name" value="CBNC"/>
</dbReference>
<dbReference type="RefSeq" id="YP_009126714.1">
    <property type="nucleotide sequence ID" value="NC_026614.1"/>
</dbReference>
<dbReference type="SMR" id="Q35128"/>
<dbReference type="FunCoup" id="Q35128">
    <property type="interactions" value="603"/>
</dbReference>
<dbReference type="STRING" id="367110.Q35128"/>
<dbReference type="EnsemblFungi" id="AGG16002">
    <property type="protein sequence ID" value="AGG16002"/>
    <property type="gene ID" value="NCU16013"/>
</dbReference>
<dbReference type="GeneID" id="23681566"/>
<dbReference type="KEGG" id="ncr:NCU16013"/>
<dbReference type="VEuPathDB" id="FungiDB:NCU16013"/>
<dbReference type="InParanoid" id="Q35128"/>
<dbReference type="OrthoDB" id="244at2759"/>
<dbReference type="Proteomes" id="UP000001805">
    <property type="component" value="Mitochondrion"/>
</dbReference>
<dbReference type="GO" id="GO:0016020">
    <property type="term" value="C:membrane"/>
    <property type="evidence" value="ECO:0000318"/>
    <property type="project" value="GO_Central"/>
</dbReference>
<dbReference type="GO" id="GO:0005743">
    <property type="term" value="C:mitochondrial inner membrane"/>
    <property type="evidence" value="ECO:0007669"/>
    <property type="project" value="UniProtKB-SubCell"/>
</dbReference>
<dbReference type="GO" id="GO:0045275">
    <property type="term" value="C:respiratory chain complex III"/>
    <property type="evidence" value="ECO:0000318"/>
    <property type="project" value="GO_Central"/>
</dbReference>
<dbReference type="GO" id="GO:0046872">
    <property type="term" value="F:metal ion binding"/>
    <property type="evidence" value="ECO:0007669"/>
    <property type="project" value="UniProtKB-KW"/>
</dbReference>
<dbReference type="GO" id="GO:0008121">
    <property type="term" value="F:ubiquinol-cytochrome-c reductase activity"/>
    <property type="evidence" value="ECO:0007669"/>
    <property type="project" value="UniProtKB-EC"/>
</dbReference>
<dbReference type="GO" id="GO:0006122">
    <property type="term" value="P:mitochondrial electron transport, ubiquinol to cytochrome c"/>
    <property type="evidence" value="ECO:0000318"/>
    <property type="project" value="GO_Central"/>
</dbReference>
<dbReference type="CDD" id="cd00290">
    <property type="entry name" value="cytochrome_b_C"/>
    <property type="match status" value="1"/>
</dbReference>
<dbReference type="CDD" id="cd00284">
    <property type="entry name" value="Cytochrome_b_N"/>
    <property type="match status" value="1"/>
</dbReference>
<dbReference type="FunFam" id="1.20.810.10:FF:000002">
    <property type="entry name" value="Cytochrome b"/>
    <property type="match status" value="1"/>
</dbReference>
<dbReference type="Gene3D" id="1.20.810.10">
    <property type="entry name" value="Cytochrome Bc1 Complex, Chain C"/>
    <property type="match status" value="1"/>
</dbReference>
<dbReference type="InterPro" id="IPR005798">
    <property type="entry name" value="Cyt_b/b6_C"/>
</dbReference>
<dbReference type="InterPro" id="IPR036150">
    <property type="entry name" value="Cyt_b/b6_C_sf"/>
</dbReference>
<dbReference type="InterPro" id="IPR005797">
    <property type="entry name" value="Cyt_b/b6_N"/>
</dbReference>
<dbReference type="InterPro" id="IPR027387">
    <property type="entry name" value="Cytb/b6-like_sf"/>
</dbReference>
<dbReference type="InterPro" id="IPR030689">
    <property type="entry name" value="Cytochrome_b"/>
</dbReference>
<dbReference type="InterPro" id="IPR048260">
    <property type="entry name" value="Cytochrome_b_C_euk/bac"/>
</dbReference>
<dbReference type="InterPro" id="IPR048259">
    <property type="entry name" value="Cytochrome_b_N_euk/bac"/>
</dbReference>
<dbReference type="InterPro" id="IPR016174">
    <property type="entry name" value="Di-haem_cyt_TM"/>
</dbReference>
<dbReference type="PANTHER" id="PTHR19271">
    <property type="entry name" value="CYTOCHROME B"/>
    <property type="match status" value="1"/>
</dbReference>
<dbReference type="PANTHER" id="PTHR19271:SF16">
    <property type="entry name" value="CYTOCHROME B"/>
    <property type="match status" value="1"/>
</dbReference>
<dbReference type="Pfam" id="PF00032">
    <property type="entry name" value="Cytochrom_B_C"/>
    <property type="match status" value="1"/>
</dbReference>
<dbReference type="Pfam" id="PF00033">
    <property type="entry name" value="Cytochrome_B"/>
    <property type="match status" value="1"/>
</dbReference>
<dbReference type="PIRSF" id="PIRSF038885">
    <property type="entry name" value="COB"/>
    <property type="match status" value="1"/>
</dbReference>
<dbReference type="SUPFAM" id="SSF81648">
    <property type="entry name" value="a domain/subunit of cytochrome bc1 complex (Ubiquinol-cytochrome c reductase)"/>
    <property type="match status" value="1"/>
</dbReference>
<dbReference type="SUPFAM" id="SSF81342">
    <property type="entry name" value="Transmembrane di-heme cytochromes"/>
    <property type="match status" value="1"/>
</dbReference>
<dbReference type="PROSITE" id="PS51003">
    <property type="entry name" value="CYTB_CTER"/>
    <property type="match status" value="1"/>
</dbReference>
<dbReference type="PROSITE" id="PS51002">
    <property type="entry name" value="CYTB_NTER"/>
    <property type="match status" value="1"/>
</dbReference>
<protein>
    <recommendedName>
        <fullName>Cytochrome b</fullName>
        <ecNumber evidence="8 11">7.1.1.8</ecNumber>
    </recommendedName>
    <alternativeName>
        <fullName>Complex III subunit 3</fullName>
    </alternativeName>
    <alternativeName>
        <fullName evidence="14">Complex III subunit III</fullName>
    </alternativeName>
    <alternativeName>
        <fullName>Cytochrome b-c1 complex subunit 3</fullName>
    </alternativeName>
    <alternativeName>
        <fullName>Ubiquinol-cytochrome c oxidoreductase complex cytochrome b subunit</fullName>
    </alternativeName>
    <alternativeName>
        <fullName>Ubiquinol-cytochrome c reductase complex 30 kDa protein</fullName>
    </alternativeName>
</protein>
<geneLocation type="mitochondrion"/>
<feature type="chain" id="PRO_0000061749" description="Cytochrome b">
    <location>
        <begin position="1"/>
        <end position="385"/>
    </location>
</feature>
<feature type="topological domain" description="Mitochondrial matrix" evidence="3">
    <location>
        <begin position="1"/>
        <end position="27"/>
    </location>
</feature>
<feature type="transmembrane region" description="Helical" evidence="3">
    <location>
        <begin position="28"/>
        <end position="51"/>
    </location>
</feature>
<feature type="topological domain" description="Mitochondrial intermembrane" evidence="3">
    <location>
        <begin position="52"/>
        <end position="74"/>
    </location>
</feature>
<feature type="transmembrane region" description="Helical" evidence="3">
    <location>
        <begin position="75"/>
        <end position="102"/>
    </location>
</feature>
<feature type="topological domain" description="Mitochondrial matrix" evidence="3">
    <location>
        <begin position="103"/>
        <end position="110"/>
    </location>
</feature>
<feature type="transmembrane region" description="Helical" evidence="3">
    <location>
        <begin position="111"/>
        <end position="135"/>
    </location>
</feature>
<feature type="topological domain" description="Mitochondrial intermembrane" evidence="3">
    <location>
        <begin position="136"/>
        <end position="172"/>
    </location>
</feature>
<feature type="transmembrane region" description="Helical" evidence="3">
    <location>
        <begin position="173"/>
        <end position="205"/>
    </location>
</feature>
<feature type="topological domain" description="Mitochondrial matrix" evidence="3">
    <location>
        <begin position="206"/>
        <end position="224"/>
    </location>
</feature>
<feature type="transmembrane region" description="Helical" evidence="3">
    <location>
        <begin position="225"/>
        <end position="247"/>
    </location>
</feature>
<feature type="topological domain" description="Mitochondrial intermembrane" evidence="3">
    <location>
        <begin position="248"/>
        <end position="288"/>
    </location>
</feature>
<feature type="transmembrane region" description="Helical" evidence="3">
    <location>
        <begin position="289"/>
        <end position="309"/>
    </location>
</feature>
<feature type="topological domain" description="Mitochondrial matrix" evidence="3">
    <location>
        <begin position="310"/>
        <end position="320"/>
    </location>
</feature>
<feature type="transmembrane region" description="Helical" evidence="3">
    <location>
        <begin position="321"/>
        <end position="341"/>
    </location>
</feature>
<feature type="topological domain" description="Mitochondrial intermembrane" evidence="3">
    <location>
        <begin position="342"/>
        <end position="348"/>
    </location>
</feature>
<feature type="transmembrane region" description="Helical" evidence="3">
    <location>
        <begin position="349"/>
        <end position="365"/>
    </location>
</feature>
<feature type="topological domain" description="Mitochondrial matrix" evidence="3">
    <location>
        <begin position="366"/>
        <end position="385"/>
    </location>
</feature>
<feature type="binding site" evidence="3">
    <location>
        <position position="16"/>
    </location>
    <ligand>
        <name>a ubiquinone</name>
        <dbReference type="ChEBI" id="CHEBI:16389"/>
    </ligand>
</feature>
<feature type="binding site" description="axial binding residue" evidence="3">
    <location>
        <position position="82"/>
    </location>
    <ligand>
        <name>heme b</name>
        <dbReference type="ChEBI" id="CHEBI:60344"/>
        <label>b562</label>
    </ligand>
    <ligandPart>
        <name>Fe</name>
        <dbReference type="ChEBI" id="CHEBI:18248"/>
    </ligandPart>
</feature>
<feature type="binding site" description="axial binding residue" evidence="3">
    <location>
        <position position="96"/>
    </location>
    <ligand>
        <name>heme b</name>
        <dbReference type="ChEBI" id="CHEBI:60344"/>
        <label>b566</label>
    </ligand>
    <ligandPart>
        <name>Fe</name>
        <dbReference type="ChEBI" id="CHEBI:18248"/>
    </ligandPart>
</feature>
<feature type="binding site" description="axial binding residue" evidence="3">
    <location>
        <position position="183"/>
    </location>
    <ligand>
        <name>heme b</name>
        <dbReference type="ChEBI" id="CHEBI:60344"/>
        <label>b562</label>
    </ligand>
    <ligandPart>
        <name>Fe</name>
        <dbReference type="ChEBI" id="CHEBI:18248"/>
    </ligandPart>
</feature>
<feature type="binding site" description="axial binding residue" evidence="3">
    <location>
        <position position="197"/>
    </location>
    <ligand>
        <name>heme b</name>
        <dbReference type="ChEBI" id="CHEBI:60344"/>
        <label>b566</label>
    </ligand>
    <ligandPart>
        <name>Fe</name>
        <dbReference type="ChEBI" id="CHEBI:18248"/>
    </ligandPart>
</feature>
<feature type="binding site" evidence="2">
    <location>
        <position position="202"/>
    </location>
    <ligand>
        <name>a ubiquinone</name>
        <dbReference type="ChEBI" id="CHEBI:16389"/>
    </ligand>
</feature>
<feature type="sequence conflict" description="In Ref. 1; AAA31961." evidence="15" ref="1">
    <original>FIW</original>
    <variation>LHL</variation>
    <location>
        <begin position="164"/>
        <end position="166"/>
    </location>
</feature>
<feature type="sequence conflict" description="In Ref. 1; AAA31961." evidence="15" ref="1">
    <original>H</original>
    <variation>Y</variation>
    <location>
        <position position="183"/>
    </location>
</feature>
<feature type="sequence conflict" description="In Ref. 1; AAA31961." evidence="15" ref="1">
    <original>P</original>
    <variation>L</variation>
    <location>
        <position position="187"/>
    </location>
</feature>
<feature type="sequence conflict" description="In Ref. 1; AAA31961." evidence="15" ref="1">
    <original>AA</original>
    <variation>VV</variation>
    <location>
        <begin position="191"/>
        <end position="192"/>
    </location>
</feature>
<feature type="sequence conflict" description="In Ref. 1; AAA31961." evidence="15" ref="1">
    <original>H</original>
    <variation>Y</variation>
    <location>
        <position position="197"/>
    </location>
</feature>
<feature type="sequence conflict" description="In Ref. 1; AAA31961." evidence="15" ref="1">
    <original>ALHDTAGS</original>
    <variation>VLYDIVGL</variation>
    <location>
        <begin position="200"/>
        <end position="207"/>
    </location>
</feature>
<feature type="sequence conflict" description="In Ref. 1; AAA31961." evidence="15" ref="1">
    <original>VS</original>
    <variation>AL</variation>
    <location>
        <begin position="213"/>
        <end position="214"/>
    </location>
</feature>
<feature type="sequence conflict" description="In Ref. 1; AAA31961." evidence="15" ref="1">
    <original>T</original>
    <variation>I</variation>
    <location>
        <position position="221"/>
    </location>
</feature>
<feature type="sequence conflict" description="In Ref. 1; AAA31961." evidence="15" ref="1">
    <original>Y</original>
    <variation>D</variation>
    <location>
        <position position="280"/>
    </location>
</feature>
<feature type="sequence conflict" description="In Ref. 1; AAA31961." evidence="15" ref="1">
    <original>F</original>
    <variation>L</variation>
    <location>
        <position position="361"/>
    </location>
</feature>
<accession>Q35128</accession>
<accession>M1R9S0</accession>
<accession>P00162</accession>
<accession>Q35132</accession>
<accession>Q95857</accession>
<reference key="1">
    <citation type="journal article" date="1983" name="EMBO J.">
        <title>Nucleotide sequence and intron structure of the apocytochrome b gene of Neurospora crassa mitochondria.</title>
        <authorList>
            <person name="Helmer-Citterich M."/>
            <person name="Morelli G."/>
            <person name="Macino G."/>
        </authorList>
    </citation>
    <scope>NUCLEOTIDE SEQUENCE [GENOMIC DNA]</scope>
    <source>
        <strain>ATCC 24698 / 74-OR23-1A / CBS 708.71 / DSM 1257 / FGSC 987</strain>
    </source>
</reference>
<reference key="2">
    <citation type="journal article" date="2003" name="Nature">
        <title>The genome sequence of the filamentous fungus Neurospora crassa.</title>
        <authorList>
            <person name="Galagan J.E."/>
            <person name="Calvo S.E."/>
            <person name="Borkovich K.A."/>
            <person name="Selker E.U."/>
            <person name="Read N.D."/>
            <person name="Jaffe D.B."/>
            <person name="FitzHugh W."/>
            <person name="Ma L.-J."/>
            <person name="Smirnov S."/>
            <person name="Purcell S."/>
            <person name="Rehman B."/>
            <person name="Elkins T."/>
            <person name="Engels R."/>
            <person name="Wang S."/>
            <person name="Nielsen C.B."/>
            <person name="Butler J."/>
            <person name="Endrizzi M."/>
            <person name="Qui D."/>
            <person name="Ianakiev P."/>
            <person name="Bell-Pedersen D."/>
            <person name="Nelson M.A."/>
            <person name="Werner-Washburne M."/>
            <person name="Selitrennikoff C.P."/>
            <person name="Kinsey J.A."/>
            <person name="Braun E.L."/>
            <person name="Zelter A."/>
            <person name="Schulte U."/>
            <person name="Kothe G.O."/>
            <person name="Jedd G."/>
            <person name="Mewes H.-W."/>
            <person name="Staben C."/>
            <person name="Marcotte E."/>
            <person name="Greenberg D."/>
            <person name="Roy A."/>
            <person name="Foley K."/>
            <person name="Naylor J."/>
            <person name="Stange-Thomann N."/>
            <person name="Barrett R."/>
            <person name="Gnerre S."/>
            <person name="Kamal M."/>
            <person name="Kamvysselis M."/>
            <person name="Mauceli E.W."/>
            <person name="Bielke C."/>
            <person name="Rudd S."/>
            <person name="Frishman D."/>
            <person name="Krystofova S."/>
            <person name="Rasmussen C."/>
            <person name="Metzenberg R.L."/>
            <person name="Perkins D.D."/>
            <person name="Kroken S."/>
            <person name="Cogoni C."/>
            <person name="Macino G."/>
            <person name="Catcheside D.E.A."/>
            <person name="Li W."/>
            <person name="Pratt R.J."/>
            <person name="Osmani S.A."/>
            <person name="DeSouza C.P.C."/>
            <person name="Glass N.L."/>
            <person name="Orbach M.J."/>
            <person name="Berglund J.A."/>
            <person name="Voelker R."/>
            <person name="Yarden O."/>
            <person name="Plamann M."/>
            <person name="Seiler S."/>
            <person name="Dunlap J.C."/>
            <person name="Radford A."/>
            <person name="Aramayo R."/>
            <person name="Natvig D.O."/>
            <person name="Alex L.A."/>
            <person name="Mannhaupt G."/>
            <person name="Ebbole D.J."/>
            <person name="Freitag M."/>
            <person name="Paulsen I."/>
            <person name="Sachs M.S."/>
            <person name="Lander E.S."/>
            <person name="Nusbaum C."/>
            <person name="Birren B.W."/>
        </authorList>
    </citation>
    <scope>NUCLEOTIDE SEQUENCE [LARGE SCALE GENOMIC DNA]</scope>
    <source>
        <strain>ATCC 24698 / 74-OR23-1A / CBS 708.71 / DSM 1257 / FGSC 987</strain>
    </source>
</reference>
<reference key="3">
    <citation type="book" date="2004" name="The Mycota II, Genetics and Biotechnology (2nd edition)">
        <title>Mitochondrial genetics of Neurospora.</title>
        <editorList>
            <person name="Kueck U."/>
        </editorList>
        <authorList>
            <person name="Kennell J.C."/>
            <person name="Collins R.A."/>
            <person name="Griffiths A.J.F."/>
            <person name="Nargang F.E."/>
        </authorList>
    </citation>
    <scope>GENOME REANNOTATION</scope>
    <source>
        <strain>ATCC 24698 / 74-OR23-1A / CBS 708.71 / DSM 1257 / FGSC 987</strain>
    </source>
</reference>
<reference key="4">
    <citation type="journal article" date="1988" name="Nucleic Acids Res.">
        <title>The self-splicing intron in the Neurospora apocytochrome b gene contains a long reading frame in frame with the upstream exon.</title>
        <authorList>
            <person name="Collins R.A."/>
            <person name="Reynolds C.A."/>
            <person name="Olive J."/>
        </authorList>
    </citation>
    <scope>NUCLEOTIDE SEQUENCE [GENOMIC DNA] OF 1-163</scope>
    <source>
        <strain>Adiopodoume-1 / FGSC 430</strain>
        <strain>ATCC 24698 / 74-OR23-1A / CBS 708.71 / DSM 1257 / FGSC 987</strain>
    </source>
</reference>
<reference key="5">
    <citation type="journal article" date="1984" name="J. Biol. Chem.">
        <title>Cytochrome b gene of Neurospora crassa mitochondria. Partial sequence and location of introns at sites different from those in Saccharomyces cerevisiae and Aspergillus nidulans.</title>
        <authorList>
            <person name="Burke J.M."/>
            <person name="Breitenberger C."/>
            <person name="Heckman J.E."/>
            <person name="Dujon B."/>
            <person name="RajBhandary U.L."/>
        </authorList>
    </citation>
    <scope>NUCLEOTIDE SEQUENCE [GENOMIC DNA] OF 132-385</scope>
    <source>
        <strain>ATCC 24698 / 74-OR23-1A / CBS 708.71 / DSM 1257 / FGSC 987</strain>
    </source>
</reference>
<reference key="6">
    <citation type="journal article" date="1979" name="Eur. J. Biochem.">
        <title>Isolation of mitochondrial succinate: ubiquinone reductase, cytochrome c reductase and cytochrome c oxidase from Neurospora crassa using nonionic detergent.</title>
        <authorList>
            <person name="Weiss H."/>
            <person name="Kolb H.J."/>
        </authorList>
    </citation>
    <scope>SUBUNIT</scope>
    <scope>SUBCELLULAR LOCATION</scope>
</reference>
<reference key="7">
    <citation type="journal article" date="1981" name="J. Mol. Biol.">
        <title>Three-dimensional structure of ubiquinol:cytochrome c reductase from Neurospora mitochondria determined by electron microscopy of membrane crystals.</title>
        <authorList>
            <person name="Leonard K."/>
            <person name="Wingfield P."/>
            <person name="Arad T."/>
            <person name="Weiss H."/>
        </authorList>
    </citation>
    <scope>SUBUNIT</scope>
</reference>
<reference key="8">
    <citation type="journal article" date="1983" name="J. Bioenerg. Biomembr.">
        <title>Comparative study of the peptide composition of Complex III (quinol-cytochrome c reductase).</title>
        <authorList>
            <person name="Mendel-Hartvig I."/>
            <person name="Nelson B.D."/>
        </authorList>
    </citation>
    <scope>SUBUNIT</scope>
</reference>
<reference key="9">
    <citation type="journal article" date="1983" name="J. Mol. Biol.">
        <title>Structural studies of cytochrome reductase. Subunit topography determined by electron microscopy of membrane crystals of a subcomplex.</title>
        <authorList>
            <person name="Karlsson B."/>
            <person name="Hovmoeller S."/>
            <person name="Weiss H."/>
            <person name="Leonard K."/>
        </authorList>
    </citation>
    <scope>SUBUNIT</scope>
</reference>
<reference key="10">
    <citation type="journal article" date="1986" name="Eur. J. Biochem.">
        <title>Dimeric ubiquinol:cytochrome c reductase of Neurospora mitochondria contains one cooperative ubiquinone-reduction centre.</title>
        <authorList>
            <person name="Linke P."/>
            <person name="Bechmann G."/>
            <person name="Gothe A."/>
            <person name="Weiss H."/>
        </authorList>
    </citation>
    <scope>FUNCTION OF COMPLEX III</scope>
</reference>
<reference key="11">
    <citation type="journal article" date="1991" name="Eur. J. Biochem.">
        <title>Regulation of the proton/electron stoichiometry of mitochondrial ubiquinol:cytochrome c reductase by the membrane potential.</title>
        <authorList>
            <person name="Bechmann G."/>
            <person name="Weiss H."/>
        </authorList>
    </citation>
    <scope>FUNCTION OF COMPLEX III</scope>
</reference>
<reference key="12">
    <citation type="journal article" date="2007" name="Eukaryot. Cell">
        <title>Supramolecular organization of the respiratory chain in Neurospora crassa mitochondria.</title>
        <authorList>
            <person name="Marques I."/>
            <person name="Dencher N.A."/>
            <person name="Videira A."/>
            <person name="Krause F."/>
        </authorList>
    </citation>
    <scope>SUBUNIT</scope>
</reference>
<reference key="13">
    <citation type="journal article" date="2009" name="Mol. Microbiol.">
        <title>Effects of mitochondrial complex III disruption in the respiratory chain of Neurospora crassa.</title>
        <authorList>
            <person name="Duarte M."/>
            <person name="Videira A."/>
        </authorList>
    </citation>
    <scope>FUNCTION OF COMPLEX III</scope>
    <scope>SUBUNIT</scope>
</reference>
<name>CYB_NEUCR</name>